<keyword id="KW-0007">Acetylation</keyword>
<keyword id="KW-0009">Actin-binding</keyword>
<keyword id="KW-0106">Calcium</keyword>
<keyword id="KW-0966">Cell projection</keyword>
<keyword id="KW-0963">Cytoplasm</keyword>
<keyword id="KW-0479">Metal-binding</keyword>
<keyword id="KW-0597">Phosphoprotein</keyword>
<keyword id="KW-1185">Reference proteome</keyword>
<keyword id="KW-0677">Repeat</keyword>
<accession>A6H742</accession>
<proteinExistence type="evidence at transcript level"/>
<name>PLSI_BOVIN</name>
<feature type="chain" id="PRO_0000364187" description="Plastin-1">
    <location>
        <begin position="1"/>
        <end position="630"/>
    </location>
</feature>
<feature type="domain" description="EF-hand 1" evidence="5">
    <location>
        <begin position="11"/>
        <end position="46"/>
    </location>
</feature>
<feature type="domain" description="EF-hand 2" evidence="5">
    <location>
        <begin position="51"/>
        <end position="86"/>
    </location>
</feature>
<feature type="domain" description="Calponin-homology (CH) 1" evidence="4">
    <location>
        <begin position="122"/>
        <end position="238"/>
    </location>
</feature>
<feature type="domain" description="Calponin-homology (CH) 2" evidence="4">
    <location>
        <begin position="266"/>
        <end position="377"/>
    </location>
</feature>
<feature type="domain" description="Calponin-homology (CH) 3" evidence="4">
    <location>
        <begin position="396"/>
        <end position="505"/>
    </location>
</feature>
<feature type="domain" description="Calponin-homology (CH) 4" evidence="4">
    <location>
        <begin position="517"/>
        <end position="626"/>
    </location>
</feature>
<feature type="region of interest" description="Actin-binding 1">
    <location>
        <begin position="108"/>
        <end position="381"/>
    </location>
</feature>
<feature type="region of interest" description="Actin-binding 2">
    <location>
        <begin position="382"/>
        <end position="626"/>
    </location>
</feature>
<feature type="binding site" evidence="5">
    <location>
        <position position="24"/>
    </location>
    <ligand>
        <name>Ca(2+)</name>
        <dbReference type="ChEBI" id="CHEBI:29108"/>
        <label>1</label>
    </ligand>
</feature>
<feature type="binding site" evidence="5">
    <location>
        <position position="26"/>
    </location>
    <ligand>
        <name>Ca(2+)</name>
        <dbReference type="ChEBI" id="CHEBI:29108"/>
        <label>1</label>
    </ligand>
</feature>
<feature type="binding site" evidence="5">
    <location>
        <position position="28"/>
    </location>
    <ligand>
        <name>Ca(2+)</name>
        <dbReference type="ChEBI" id="CHEBI:29108"/>
        <label>1</label>
    </ligand>
</feature>
<feature type="binding site" evidence="5">
    <location>
        <position position="30"/>
    </location>
    <ligand>
        <name>Ca(2+)</name>
        <dbReference type="ChEBI" id="CHEBI:29108"/>
        <label>1</label>
    </ligand>
</feature>
<feature type="binding site" evidence="5">
    <location>
        <position position="35"/>
    </location>
    <ligand>
        <name>Ca(2+)</name>
        <dbReference type="ChEBI" id="CHEBI:29108"/>
        <label>1</label>
    </ligand>
</feature>
<feature type="binding site" evidence="6">
    <location>
        <position position="64"/>
    </location>
    <ligand>
        <name>Ca(2+)</name>
        <dbReference type="ChEBI" id="CHEBI:29108"/>
        <label>3</label>
    </ligand>
</feature>
<feature type="binding site" evidence="6">
    <location>
        <position position="66"/>
    </location>
    <ligand>
        <name>Ca(2+)</name>
        <dbReference type="ChEBI" id="CHEBI:29108"/>
        <label>3</label>
    </ligand>
</feature>
<feature type="binding site" evidence="6">
    <location>
        <position position="68"/>
    </location>
    <ligand>
        <name>Ca(2+)</name>
        <dbReference type="ChEBI" id="CHEBI:29108"/>
        <label>3</label>
    </ligand>
</feature>
<feature type="binding site" evidence="6">
    <location>
        <position position="70"/>
    </location>
    <ligand>
        <name>Ca(2+)</name>
        <dbReference type="ChEBI" id="CHEBI:29108"/>
        <label>3</label>
    </ligand>
</feature>
<feature type="binding site" evidence="6">
    <location>
        <position position="75"/>
    </location>
    <ligand>
        <name>Ca(2+)</name>
        <dbReference type="ChEBI" id="CHEBI:29108"/>
        <label>3</label>
    </ligand>
</feature>
<feature type="modified residue" description="N-acetylmethionine" evidence="2">
    <location>
        <position position="1"/>
    </location>
</feature>
<comment type="function">
    <text evidence="3">Actin-bundling protein. In the inner ear, it is required for stereocilia formation. Mediates liquid packing of actin filaments that is necessary for stereocilia to grow to their proper dimensions.</text>
</comment>
<comment type="subunit">
    <text evidence="1">Monomer.</text>
</comment>
<comment type="subcellular location">
    <subcellularLocation>
        <location evidence="3">Cytoplasm</location>
    </subcellularLocation>
    <subcellularLocation>
        <location evidence="3">Cell projection</location>
        <location evidence="3">Stereocilium</location>
    </subcellularLocation>
</comment>
<comment type="PTM">
    <text evidence="1">Phosphorylated.</text>
</comment>
<protein>
    <recommendedName>
        <fullName>Plastin-1</fullName>
    </recommendedName>
</protein>
<dbReference type="EMBL" id="BC146105">
    <property type="protein sequence ID" value="AAI46106.1"/>
    <property type="molecule type" value="mRNA"/>
</dbReference>
<dbReference type="RefSeq" id="NP_001096769.1">
    <property type="nucleotide sequence ID" value="NM_001103299.2"/>
</dbReference>
<dbReference type="RefSeq" id="XP_010799858.1">
    <property type="nucleotide sequence ID" value="XM_010801556.4"/>
</dbReference>
<dbReference type="RefSeq" id="XP_010799860.1">
    <property type="nucleotide sequence ID" value="XM_010801558.2"/>
</dbReference>
<dbReference type="RefSeq" id="XP_015328779.1">
    <property type="nucleotide sequence ID" value="XM_015473293.1"/>
</dbReference>
<dbReference type="RefSeq" id="XP_059742698.1">
    <property type="nucleotide sequence ID" value="XM_059886715.1"/>
</dbReference>
<dbReference type="SMR" id="A6H742"/>
<dbReference type="FunCoup" id="A6H742">
    <property type="interactions" value="1190"/>
</dbReference>
<dbReference type="STRING" id="9913.ENSBTAP00000053019"/>
<dbReference type="PaxDb" id="9913-ENSBTAP00000053019"/>
<dbReference type="PeptideAtlas" id="A6H742"/>
<dbReference type="Ensembl" id="ENSBTAT00000049695.5">
    <property type="protein sequence ID" value="ENSBTAP00000053019.2"/>
    <property type="gene ID" value="ENSBTAG00000023429.6"/>
</dbReference>
<dbReference type="GeneID" id="616560"/>
<dbReference type="KEGG" id="bta:616560"/>
<dbReference type="CTD" id="5357"/>
<dbReference type="VEuPathDB" id="HostDB:ENSBTAG00000023429"/>
<dbReference type="VGNC" id="VGNC:33051">
    <property type="gene designation" value="PLS1"/>
</dbReference>
<dbReference type="eggNOG" id="KOG0046">
    <property type="taxonomic scope" value="Eukaryota"/>
</dbReference>
<dbReference type="GeneTree" id="ENSGT00950000183097"/>
<dbReference type="HOGENOM" id="CLU_015284_2_0_1"/>
<dbReference type="InParanoid" id="A6H742"/>
<dbReference type="OMA" id="GILLXEN"/>
<dbReference type="OrthoDB" id="431378at2759"/>
<dbReference type="TreeFam" id="TF300680"/>
<dbReference type="Proteomes" id="UP000009136">
    <property type="component" value="Chromosome 1"/>
</dbReference>
<dbReference type="Bgee" id="ENSBTAG00000023429">
    <property type="expression patterns" value="Expressed in abomasum and 87 other cell types or tissues"/>
</dbReference>
<dbReference type="GO" id="GO:0005884">
    <property type="term" value="C:actin filament"/>
    <property type="evidence" value="ECO:0000318"/>
    <property type="project" value="GO_Central"/>
</dbReference>
<dbReference type="GO" id="GO:0032432">
    <property type="term" value="C:actin filament bundle"/>
    <property type="evidence" value="ECO:0000318"/>
    <property type="project" value="GO_Central"/>
</dbReference>
<dbReference type="GO" id="GO:0005903">
    <property type="term" value="C:brush border"/>
    <property type="evidence" value="ECO:0007669"/>
    <property type="project" value="Ensembl"/>
</dbReference>
<dbReference type="GO" id="GO:0005737">
    <property type="term" value="C:cytoplasm"/>
    <property type="evidence" value="ECO:0000318"/>
    <property type="project" value="GO_Central"/>
</dbReference>
<dbReference type="GO" id="GO:0005829">
    <property type="term" value="C:cytosol"/>
    <property type="evidence" value="ECO:0007669"/>
    <property type="project" value="Ensembl"/>
</dbReference>
<dbReference type="GO" id="GO:0005886">
    <property type="term" value="C:plasma membrane"/>
    <property type="evidence" value="ECO:0007669"/>
    <property type="project" value="Ensembl"/>
</dbReference>
<dbReference type="GO" id="GO:0032420">
    <property type="term" value="C:stereocilium"/>
    <property type="evidence" value="ECO:0000250"/>
    <property type="project" value="UniProtKB"/>
</dbReference>
<dbReference type="GO" id="GO:1990357">
    <property type="term" value="C:terminal web"/>
    <property type="evidence" value="ECO:0007669"/>
    <property type="project" value="Ensembl"/>
</dbReference>
<dbReference type="GO" id="GO:0051015">
    <property type="term" value="F:actin filament binding"/>
    <property type="evidence" value="ECO:0000318"/>
    <property type="project" value="GO_Central"/>
</dbReference>
<dbReference type="GO" id="GO:0005509">
    <property type="term" value="F:calcium ion binding"/>
    <property type="evidence" value="ECO:0007669"/>
    <property type="project" value="InterPro"/>
</dbReference>
<dbReference type="GO" id="GO:0051017">
    <property type="term" value="P:actin filament bundle assembly"/>
    <property type="evidence" value="ECO:0000318"/>
    <property type="project" value="GO_Central"/>
</dbReference>
<dbReference type="GO" id="GO:0051639">
    <property type="term" value="P:actin filament network formation"/>
    <property type="evidence" value="ECO:0000318"/>
    <property type="project" value="GO_Central"/>
</dbReference>
<dbReference type="GO" id="GO:0060088">
    <property type="term" value="P:auditory receptor cell stereocilium organization"/>
    <property type="evidence" value="ECO:0000250"/>
    <property type="project" value="UniProtKB"/>
</dbReference>
<dbReference type="GO" id="GO:0001951">
    <property type="term" value="P:intestinal D-glucose absorption"/>
    <property type="evidence" value="ECO:0007669"/>
    <property type="project" value="Ensembl"/>
</dbReference>
<dbReference type="GO" id="GO:0040018">
    <property type="term" value="P:positive regulation of multicellular organism growth"/>
    <property type="evidence" value="ECO:0007669"/>
    <property type="project" value="Ensembl"/>
</dbReference>
<dbReference type="GO" id="GO:1903078">
    <property type="term" value="P:positive regulation of protein localization to plasma membrane"/>
    <property type="evidence" value="ECO:0007669"/>
    <property type="project" value="Ensembl"/>
</dbReference>
<dbReference type="GO" id="GO:0032532">
    <property type="term" value="P:regulation of microvillus length"/>
    <property type="evidence" value="ECO:0007669"/>
    <property type="project" value="Ensembl"/>
</dbReference>
<dbReference type="GO" id="GO:1902896">
    <property type="term" value="P:terminal web assembly"/>
    <property type="evidence" value="ECO:0007669"/>
    <property type="project" value="Ensembl"/>
</dbReference>
<dbReference type="GO" id="GO:0060121">
    <property type="term" value="P:vestibular receptor cell stereocilium organization"/>
    <property type="evidence" value="ECO:0000250"/>
    <property type="project" value="UniProtKB"/>
</dbReference>
<dbReference type="CDD" id="cd21323">
    <property type="entry name" value="CH_PLS1_rpt1"/>
    <property type="match status" value="1"/>
</dbReference>
<dbReference type="CDD" id="cd21326">
    <property type="entry name" value="CH_PLS1_rpt2"/>
    <property type="match status" value="1"/>
</dbReference>
<dbReference type="CDD" id="cd21329">
    <property type="entry name" value="CH_PLS1_rpt3"/>
    <property type="match status" value="1"/>
</dbReference>
<dbReference type="CDD" id="cd21332">
    <property type="entry name" value="CH_PLS1_rpt4"/>
    <property type="match status" value="1"/>
</dbReference>
<dbReference type="CDD" id="cd00051">
    <property type="entry name" value="EFh"/>
    <property type="match status" value="1"/>
</dbReference>
<dbReference type="FunFam" id="1.10.238.10:FF:000059">
    <property type="entry name" value="Plastin 1"/>
    <property type="match status" value="1"/>
</dbReference>
<dbReference type="FunFam" id="1.10.418.10:FF:000010">
    <property type="entry name" value="Plastin-3 isoform 1"/>
    <property type="match status" value="1"/>
</dbReference>
<dbReference type="FunFam" id="1.10.418.10:FF:000012">
    <property type="entry name" value="Plastin-3 isoform 1"/>
    <property type="match status" value="1"/>
</dbReference>
<dbReference type="FunFam" id="1.10.418.10:FF:000014">
    <property type="entry name" value="Plastin-3 isoform 1"/>
    <property type="match status" value="1"/>
</dbReference>
<dbReference type="FunFam" id="1.10.418.10:FF:000025">
    <property type="entry name" value="Plastin-3 isoform 1"/>
    <property type="match status" value="1"/>
</dbReference>
<dbReference type="Gene3D" id="1.10.418.10">
    <property type="entry name" value="Calponin-like domain"/>
    <property type="match status" value="4"/>
</dbReference>
<dbReference type="Gene3D" id="1.10.238.10">
    <property type="entry name" value="EF-hand"/>
    <property type="match status" value="1"/>
</dbReference>
<dbReference type="InterPro" id="IPR001589">
    <property type="entry name" value="Actinin_actin-bd_CS"/>
</dbReference>
<dbReference type="InterPro" id="IPR001715">
    <property type="entry name" value="CH_dom"/>
</dbReference>
<dbReference type="InterPro" id="IPR036872">
    <property type="entry name" value="CH_dom_sf"/>
</dbReference>
<dbReference type="InterPro" id="IPR011992">
    <property type="entry name" value="EF-hand-dom_pair"/>
</dbReference>
<dbReference type="InterPro" id="IPR018247">
    <property type="entry name" value="EF_Hand_1_Ca_BS"/>
</dbReference>
<dbReference type="InterPro" id="IPR002048">
    <property type="entry name" value="EF_hand_dom"/>
</dbReference>
<dbReference type="InterPro" id="IPR039959">
    <property type="entry name" value="Fimbrin/Plastin"/>
</dbReference>
<dbReference type="PANTHER" id="PTHR19961">
    <property type="entry name" value="FIMBRIN/PLASTIN"/>
    <property type="match status" value="1"/>
</dbReference>
<dbReference type="PANTHER" id="PTHR19961:SF27">
    <property type="entry name" value="PLASTIN-1"/>
    <property type="match status" value="1"/>
</dbReference>
<dbReference type="Pfam" id="PF00307">
    <property type="entry name" value="CH"/>
    <property type="match status" value="4"/>
</dbReference>
<dbReference type="Pfam" id="PF13499">
    <property type="entry name" value="EF-hand_7"/>
    <property type="match status" value="1"/>
</dbReference>
<dbReference type="SMART" id="SM00033">
    <property type="entry name" value="CH"/>
    <property type="match status" value="4"/>
</dbReference>
<dbReference type="SMART" id="SM00054">
    <property type="entry name" value="EFh"/>
    <property type="match status" value="2"/>
</dbReference>
<dbReference type="SUPFAM" id="SSF47576">
    <property type="entry name" value="Calponin-homology domain, CH-domain"/>
    <property type="match status" value="1"/>
</dbReference>
<dbReference type="SUPFAM" id="SSF47473">
    <property type="entry name" value="EF-hand"/>
    <property type="match status" value="1"/>
</dbReference>
<dbReference type="PROSITE" id="PS00019">
    <property type="entry name" value="ACTININ_1"/>
    <property type="match status" value="2"/>
</dbReference>
<dbReference type="PROSITE" id="PS00020">
    <property type="entry name" value="ACTININ_2"/>
    <property type="match status" value="2"/>
</dbReference>
<dbReference type="PROSITE" id="PS50021">
    <property type="entry name" value="CH"/>
    <property type="match status" value="4"/>
</dbReference>
<dbReference type="PROSITE" id="PS00018">
    <property type="entry name" value="EF_HAND_1"/>
    <property type="match status" value="1"/>
</dbReference>
<dbReference type="PROSITE" id="PS50222">
    <property type="entry name" value="EF_HAND_2"/>
    <property type="match status" value="2"/>
</dbReference>
<evidence type="ECO:0000250" key="1"/>
<evidence type="ECO:0000250" key="2">
    <source>
        <dbReference type="UniProtKB" id="Q14651"/>
    </source>
</evidence>
<evidence type="ECO:0000250" key="3">
    <source>
        <dbReference type="UniProtKB" id="Q3V0K9"/>
    </source>
</evidence>
<evidence type="ECO:0000255" key="4">
    <source>
        <dbReference type="PROSITE-ProRule" id="PRU00044"/>
    </source>
</evidence>
<evidence type="ECO:0000255" key="5">
    <source>
        <dbReference type="PROSITE-ProRule" id="PRU00448"/>
    </source>
</evidence>
<evidence type="ECO:0000305" key="6"/>
<reference key="1">
    <citation type="submission" date="2007-06" db="EMBL/GenBank/DDBJ databases">
        <authorList>
            <consortium name="NIH - Mammalian Gene Collection (MGC) project"/>
        </authorList>
    </citation>
    <scope>NUCLEOTIDE SEQUENCE [LARGE SCALE MRNA]</scope>
    <source>
        <strain>Crossbred X Angus</strain>
        <tissue>Ileum</tissue>
    </source>
</reference>
<sequence>MENSTTTISREELEELQEAFNKIDIDNSGYVSDYELQDLFKEASLPLPGYKVREIVEKILAVADNNKDSRISFEEFVSLMQELKSKDISKTFRKIINKREGITAIGGTSSISSEGTQHSYSEEEKVAFVNWINKALENDPDCKHLIPMNPNDDSLFKSLADGILLCKMINLSEPDTIDERAINKKKLTPFTISENLNLALNSASAIGCTVVNIGAQDLTEGKPHLVLGLLWQIIKVGLFADIEISRNEALIALLKEGEDLEELMRLSPEELLLQWVNYHLTNAGWPTISNFSHDIKDSRAYFHLLNQIAPKGDRDDGPAIAIDLTGFSEKNDLKRAEFMLQEADKLGCRQFVTPADVVSGNPKLNLAFVANLFNTYPGLHKPDNNDIDVNLLEGESKEERTFRNWMNSLGVNPYINHLYSDLADALVIFQLYEMIRVPVDWSHVNKPPYPALGGNMKKIENCNYAVELGKNKAKFSLVGIAGQDLNEGNSTLTLALVWQLMRRYTLNVLSDLGEGEKVNDAIIIEWVNQTLKSANKNTFISSFKDKSISTSLPVLDLIDAIAPNAVRQEMIKREDLSDEDKLNNAKYAISVARKIGARIYALPDDLVEVKPKMVMTVFACLMGKGLNKIK</sequence>
<organism>
    <name type="scientific">Bos taurus</name>
    <name type="common">Bovine</name>
    <dbReference type="NCBI Taxonomy" id="9913"/>
    <lineage>
        <taxon>Eukaryota</taxon>
        <taxon>Metazoa</taxon>
        <taxon>Chordata</taxon>
        <taxon>Craniata</taxon>
        <taxon>Vertebrata</taxon>
        <taxon>Euteleostomi</taxon>
        <taxon>Mammalia</taxon>
        <taxon>Eutheria</taxon>
        <taxon>Laurasiatheria</taxon>
        <taxon>Artiodactyla</taxon>
        <taxon>Ruminantia</taxon>
        <taxon>Pecora</taxon>
        <taxon>Bovidae</taxon>
        <taxon>Bovinae</taxon>
        <taxon>Bos</taxon>
    </lineage>
</organism>
<gene>
    <name type="primary">PLS1</name>
</gene>